<accession>Q0T827</accession>
<sequence>MTDQRPLTIALVAGETSGDILGAGLIRALKERVPNARFVGVAGPRMQAEGCEAWYEIEELAVMGIVEVLGRLRRLLHIRADLTKRFGELKPDVFVGIDAPDFNITLEGNLKKQGIKTIHYVSPSVWAWRQKRVFKIGRATDLVLAFLPFEKAFYDKYNVPCRFIGHTMADAMPLDPDKNGARDVLGIPYDAHCLALLPGSRGAEVEMLSADFLKTAQLLRQTYPDLEIVVPLVNAKRREQFERIKAEVAPDLSVHLLDGMGREAMVASDAALLASGTAALECMLAKCPMVVGYRMKPFTFWLAKRLVKTDYVSLPNLLAGRELVKELLQEECEPQKLAAALLPLLANGKTSHAMHDTFRELHQQIRCNADEQAAQAVLELAQ</sequence>
<evidence type="ECO:0000255" key="1">
    <source>
        <dbReference type="HAMAP-Rule" id="MF_00392"/>
    </source>
</evidence>
<feature type="chain" id="PRO_1000049422" description="Lipid-A-disaccharide synthase">
    <location>
        <begin position="1"/>
        <end position="382"/>
    </location>
</feature>
<comment type="function">
    <text evidence="1">Condensation of UDP-2,3-diacylglucosamine and 2,3-diacylglucosamine-1-phosphate to form lipid A disaccharide, a precursor of lipid A, a phosphorylated glycolipid that anchors the lipopolysaccharide to the outer membrane of the cell.</text>
</comment>
<comment type="catalytic activity">
    <reaction evidence="1">
        <text>2-N,3-O-bis[(3R)-3-hydroxytetradecanoyl]-alpha-D-glucosaminyl 1-phosphate + UDP-2-N,3-O-bis[(3R)-3-hydroxytetradecanoyl]-alpha-D-glucosamine = lipid A disaccharide (E. coli) + UDP + H(+)</text>
        <dbReference type="Rhea" id="RHEA:22668"/>
        <dbReference type="ChEBI" id="CHEBI:15378"/>
        <dbReference type="ChEBI" id="CHEBI:57957"/>
        <dbReference type="ChEBI" id="CHEBI:58223"/>
        <dbReference type="ChEBI" id="CHEBI:58466"/>
        <dbReference type="ChEBI" id="CHEBI:78847"/>
    </reaction>
</comment>
<comment type="catalytic activity">
    <reaction evidence="1">
        <text>a lipid X + a UDP-2-N,3-O-bis[(3R)-3-hydroxyacyl]-alpha-D-glucosamine = a lipid A disaccharide + UDP + H(+)</text>
        <dbReference type="Rhea" id="RHEA:67828"/>
        <dbReference type="ChEBI" id="CHEBI:15378"/>
        <dbReference type="ChEBI" id="CHEBI:58223"/>
        <dbReference type="ChEBI" id="CHEBI:137748"/>
        <dbReference type="ChEBI" id="CHEBI:176338"/>
        <dbReference type="ChEBI" id="CHEBI:176343"/>
        <dbReference type="EC" id="2.4.1.182"/>
    </reaction>
</comment>
<comment type="pathway">
    <text evidence="1">Glycolipid biosynthesis; lipid IV(A) biosynthesis; lipid IV(A) from (3R)-3-hydroxytetradecanoyl-[acyl-carrier-protein] and UDP-N-acetyl-alpha-D-glucosamine: step 5/6.</text>
</comment>
<comment type="similarity">
    <text evidence="1">Belongs to the LpxB family.</text>
</comment>
<gene>
    <name evidence="1" type="primary">lpxB</name>
    <name type="ordered locus">SFV_0165</name>
</gene>
<name>LPXB_SHIF8</name>
<proteinExistence type="inferred from homology"/>
<protein>
    <recommendedName>
        <fullName evidence="1">Lipid-A-disaccharide synthase</fullName>
        <ecNumber evidence="1">2.4.1.182</ecNumber>
    </recommendedName>
</protein>
<reference key="1">
    <citation type="journal article" date="2006" name="BMC Genomics">
        <title>Complete genome sequence of Shigella flexneri 5b and comparison with Shigella flexneri 2a.</title>
        <authorList>
            <person name="Nie H."/>
            <person name="Yang F."/>
            <person name="Zhang X."/>
            <person name="Yang J."/>
            <person name="Chen L."/>
            <person name="Wang J."/>
            <person name="Xiong Z."/>
            <person name="Peng J."/>
            <person name="Sun L."/>
            <person name="Dong J."/>
            <person name="Xue Y."/>
            <person name="Xu X."/>
            <person name="Chen S."/>
            <person name="Yao Z."/>
            <person name="Shen Y."/>
            <person name="Jin Q."/>
        </authorList>
    </citation>
    <scope>NUCLEOTIDE SEQUENCE [LARGE SCALE GENOMIC DNA]</scope>
    <source>
        <strain>8401</strain>
    </source>
</reference>
<dbReference type="EC" id="2.4.1.182" evidence="1"/>
<dbReference type="EMBL" id="CP000266">
    <property type="protein sequence ID" value="ABF02449.1"/>
    <property type="molecule type" value="Genomic_DNA"/>
</dbReference>
<dbReference type="RefSeq" id="WP_000132064.1">
    <property type="nucleotide sequence ID" value="NC_008258.1"/>
</dbReference>
<dbReference type="SMR" id="Q0T827"/>
<dbReference type="CAZy" id="GT19">
    <property type="family name" value="Glycosyltransferase Family 19"/>
</dbReference>
<dbReference type="KEGG" id="sfv:SFV_0165"/>
<dbReference type="HOGENOM" id="CLU_036577_3_0_6"/>
<dbReference type="UniPathway" id="UPA00359">
    <property type="reaction ID" value="UER00481"/>
</dbReference>
<dbReference type="Proteomes" id="UP000000659">
    <property type="component" value="Chromosome"/>
</dbReference>
<dbReference type="GO" id="GO:0016020">
    <property type="term" value="C:membrane"/>
    <property type="evidence" value="ECO:0007669"/>
    <property type="project" value="GOC"/>
</dbReference>
<dbReference type="GO" id="GO:0008915">
    <property type="term" value="F:lipid-A-disaccharide synthase activity"/>
    <property type="evidence" value="ECO:0007669"/>
    <property type="project" value="UniProtKB-UniRule"/>
</dbReference>
<dbReference type="GO" id="GO:0005543">
    <property type="term" value="F:phospholipid binding"/>
    <property type="evidence" value="ECO:0007669"/>
    <property type="project" value="TreeGrafter"/>
</dbReference>
<dbReference type="GO" id="GO:0009245">
    <property type="term" value="P:lipid A biosynthetic process"/>
    <property type="evidence" value="ECO:0007669"/>
    <property type="project" value="UniProtKB-UniRule"/>
</dbReference>
<dbReference type="CDD" id="cd01635">
    <property type="entry name" value="Glycosyltransferase_GTB-type"/>
    <property type="match status" value="1"/>
</dbReference>
<dbReference type="HAMAP" id="MF_00392">
    <property type="entry name" value="LpxB"/>
    <property type="match status" value="1"/>
</dbReference>
<dbReference type="InterPro" id="IPR003835">
    <property type="entry name" value="Glyco_trans_19"/>
</dbReference>
<dbReference type="NCBIfam" id="TIGR00215">
    <property type="entry name" value="lpxB"/>
    <property type="match status" value="1"/>
</dbReference>
<dbReference type="PANTHER" id="PTHR30372">
    <property type="entry name" value="LIPID-A-DISACCHARIDE SYNTHASE"/>
    <property type="match status" value="1"/>
</dbReference>
<dbReference type="PANTHER" id="PTHR30372:SF4">
    <property type="entry name" value="LIPID-A-DISACCHARIDE SYNTHASE, MITOCHONDRIAL-RELATED"/>
    <property type="match status" value="1"/>
</dbReference>
<dbReference type="Pfam" id="PF02684">
    <property type="entry name" value="LpxB"/>
    <property type="match status" value="1"/>
</dbReference>
<dbReference type="SUPFAM" id="SSF53756">
    <property type="entry name" value="UDP-Glycosyltransferase/glycogen phosphorylase"/>
    <property type="match status" value="1"/>
</dbReference>
<keyword id="KW-0328">Glycosyltransferase</keyword>
<keyword id="KW-0441">Lipid A biosynthesis</keyword>
<keyword id="KW-0444">Lipid biosynthesis</keyword>
<keyword id="KW-0443">Lipid metabolism</keyword>
<keyword id="KW-0808">Transferase</keyword>
<organism>
    <name type="scientific">Shigella flexneri serotype 5b (strain 8401)</name>
    <dbReference type="NCBI Taxonomy" id="373384"/>
    <lineage>
        <taxon>Bacteria</taxon>
        <taxon>Pseudomonadati</taxon>
        <taxon>Pseudomonadota</taxon>
        <taxon>Gammaproteobacteria</taxon>
        <taxon>Enterobacterales</taxon>
        <taxon>Enterobacteriaceae</taxon>
        <taxon>Shigella</taxon>
    </lineage>
</organism>